<feature type="chain" id="PRO_0000119214" description="V-type proton ATPase 116 kDa subunit a 1">
    <location>
        <begin position="1"/>
        <end position="838"/>
    </location>
</feature>
<feature type="topological domain" description="Cytoplasmic" evidence="4">
    <location>
        <begin position="1"/>
        <end position="388"/>
    </location>
</feature>
<feature type="transmembrane region" description="Helical" evidence="4">
    <location>
        <begin position="389"/>
        <end position="407"/>
    </location>
</feature>
<feature type="topological domain" description="Vacuolar" evidence="4">
    <location>
        <begin position="408"/>
        <end position="409"/>
    </location>
</feature>
<feature type="transmembrane region" description="Helical" evidence="4">
    <location>
        <begin position="410"/>
        <end position="426"/>
    </location>
</feature>
<feature type="topological domain" description="Cytoplasmic" evidence="4">
    <location>
        <begin position="427"/>
        <end position="441"/>
    </location>
</feature>
<feature type="transmembrane region" description="Helical" evidence="4">
    <location>
        <begin position="442"/>
        <end position="471"/>
    </location>
</feature>
<feature type="topological domain" description="Vacuolar" evidence="4">
    <location>
        <begin position="472"/>
        <end position="535"/>
    </location>
</feature>
<feature type="transmembrane region" description="Helical" evidence="4">
    <location>
        <begin position="536"/>
        <end position="555"/>
    </location>
</feature>
<feature type="topological domain" description="Cytoplasmic" evidence="4">
    <location>
        <begin position="556"/>
        <end position="573"/>
    </location>
</feature>
<feature type="transmembrane region" description="Helical" evidence="4">
    <location>
        <begin position="574"/>
        <end position="594"/>
    </location>
</feature>
<feature type="topological domain" description="Vacuolar" evidence="4">
    <location>
        <begin position="595"/>
        <end position="639"/>
    </location>
</feature>
<feature type="transmembrane region" description="Helical" evidence="4">
    <location>
        <begin position="640"/>
        <end position="659"/>
    </location>
</feature>
<feature type="topological domain" description="Cytoplasmic" evidence="4">
    <location>
        <begin position="660"/>
        <end position="725"/>
    </location>
</feature>
<feature type="transmembrane region" description="Helical" evidence="4">
    <location>
        <begin position="726"/>
        <end position="750"/>
    </location>
</feature>
<feature type="topological domain" description="Vacuolar" evidence="4">
    <location>
        <begin position="751"/>
        <end position="771"/>
    </location>
</feature>
<feature type="transmembrane region" description="Helical" evidence="4">
    <location>
        <begin position="772"/>
        <end position="810"/>
    </location>
</feature>
<feature type="topological domain" description="Cytoplasmic" evidence="4">
    <location>
        <begin position="811"/>
        <end position="838"/>
    </location>
</feature>
<feature type="modified residue" description="Phosphothreonine" evidence="3">
    <location>
        <position position="250"/>
    </location>
</feature>
<feature type="modified residue" description="Phosphothreonine" evidence="2">
    <location>
        <position position="360"/>
    </location>
</feature>
<feature type="modified residue" description="Phosphotyrosine" evidence="3">
    <location>
        <position position="364"/>
    </location>
</feature>
<feature type="splice variant" id="VSP_000344" description="In isoform II." evidence="7">
    <location>
        <begin position="706"/>
        <end position="711"/>
    </location>
</feature>
<feature type="turn" evidence="18">
    <location>
        <begin position="369"/>
        <end position="371"/>
    </location>
</feature>
<feature type="helix" evidence="18">
    <location>
        <begin position="372"/>
        <end position="379"/>
    </location>
</feature>
<feature type="helix" evidence="18">
    <location>
        <begin position="392"/>
        <end position="406"/>
    </location>
</feature>
<feature type="helix" evidence="18">
    <location>
        <begin position="410"/>
        <end position="425"/>
    </location>
</feature>
<feature type="helix" evidence="18">
    <location>
        <begin position="427"/>
        <end position="432"/>
    </location>
</feature>
<feature type="helix" evidence="18">
    <location>
        <begin position="438"/>
        <end position="445"/>
    </location>
</feature>
<feature type="helix" evidence="18">
    <location>
        <begin position="447"/>
        <end position="464"/>
    </location>
</feature>
<feature type="helix" evidence="18">
    <location>
        <begin position="482"/>
        <end position="486"/>
    </location>
</feature>
<feature type="helix" evidence="18">
    <location>
        <begin position="492"/>
        <end position="497"/>
    </location>
</feature>
<feature type="strand" evidence="18">
    <location>
        <begin position="505"/>
        <end position="507"/>
    </location>
</feature>
<feature type="strand" evidence="18">
    <location>
        <begin position="516"/>
        <end position="519"/>
    </location>
</feature>
<feature type="helix" evidence="18">
    <location>
        <begin position="522"/>
        <end position="525"/>
    </location>
</feature>
<feature type="helix" evidence="18">
    <location>
        <begin position="529"/>
        <end position="563"/>
    </location>
</feature>
<feature type="helix" evidence="18">
    <location>
        <begin position="566"/>
        <end position="570"/>
    </location>
</feature>
<feature type="helix" evidence="18">
    <location>
        <begin position="573"/>
        <end position="583"/>
    </location>
</feature>
<feature type="helix" evidence="18">
    <location>
        <begin position="585"/>
        <end position="597"/>
    </location>
</feature>
<feature type="helix" evidence="18">
    <location>
        <begin position="609"/>
        <end position="618"/>
    </location>
</feature>
<feature type="strand" evidence="18">
    <location>
        <begin position="623"/>
        <end position="626"/>
    </location>
</feature>
<feature type="helix" evidence="18">
    <location>
        <begin position="633"/>
        <end position="652"/>
    </location>
</feature>
<feature type="helix" evidence="18">
    <location>
        <begin position="654"/>
        <end position="664"/>
    </location>
</feature>
<feature type="turn" evidence="18">
    <location>
        <begin position="665"/>
        <end position="667"/>
    </location>
</feature>
<feature type="helix" evidence="18">
    <location>
        <begin position="714"/>
        <end position="738"/>
    </location>
</feature>
<feature type="helix" evidence="18">
    <location>
        <begin position="741"/>
        <end position="765"/>
    </location>
</feature>
<feature type="helix" evidence="18">
    <location>
        <begin position="772"/>
        <end position="789"/>
    </location>
</feature>
<feature type="turn" evidence="18">
    <location>
        <begin position="790"/>
        <end position="793"/>
    </location>
</feature>
<feature type="helix" evidence="18">
    <location>
        <begin position="794"/>
        <end position="808"/>
    </location>
</feature>
<feature type="turn" evidence="18">
    <location>
        <begin position="809"/>
        <end position="815"/>
    </location>
</feature>
<proteinExistence type="evidence at protein level"/>
<dbReference type="EMBL" id="M58758">
    <property type="protein sequence ID" value="AAA41962.1"/>
    <property type="molecule type" value="mRNA"/>
</dbReference>
<dbReference type="PIR" id="B38656">
    <property type="entry name" value="B38656"/>
</dbReference>
<dbReference type="RefSeq" id="NP_113792.2">
    <property type="nucleotide sequence ID" value="NM_031604.2"/>
</dbReference>
<dbReference type="PDB" id="6VQ6">
    <property type="method" value="EM"/>
    <property type="resolution" value="3.90 A"/>
    <property type="chains" value="a=1-838"/>
</dbReference>
<dbReference type="PDB" id="6VQ7">
    <property type="method" value="EM"/>
    <property type="resolution" value="4.00 A"/>
    <property type="chains" value="a=1-838"/>
</dbReference>
<dbReference type="PDB" id="6VQ8">
    <property type="method" value="EM"/>
    <property type="resolution" value="3.90 A"/>
    <property type="chains" value="a=1-838"/>
</dbReference>
<dbReference type="PDB" id="6VQC">
    <property type="method" value="EM"/>
    <property type="resolution" value="3.80 A"/>
    <property type="chains" value="a=1-838"/>
</dbReference>
<dbReference type="PDB" id="6VQG">
    <property type="method" value="EM"/>
    <property type="resolution" value="4.20 A"/>
    <property type="chains" value="a=1-838"/>
</dbReference>
<dbReference type="PDB" id="6VQH">
    <property type="method" value="EM"/>
    <property type="resolution" value="4.40 A"/>
    <property type="chains" value="a=1-838"/>
</dbReference>
<dbReference type="PDB" id="6VQI">
    <property type="method" value="EM"/>
    <property type="resolution" value="4.30 A"/>
    <property type="chains" value="a=1-838"/>
</dbReference>
<dbReference type="PDB" id="6VQJ">
    <property type="method" value="EM"/>
    <property type="resolution" value="5.70 A"/>
    <property type="chains" value="a=1-838"/>
</dbReference>
<dbReference type="PDB" id="6VQK">
    <property type="method" value="EM"/>
    <property type="resolution" value="5.70 A"/>
    <property type="chains" value="a=1-838"/>
</dbReference>
<dbReference type="PDB" id="7UZF">
    <property type="method" value="EM"/>
    <property type="resolution" value="3.80 A"/>
    <property type="chains" value="a=1-838"/>
</dbReference>
<dbReference type="PDB" id="7UZG">
    <property type="method" value="EM"/>
    <property type="resolution" value="3.70 A"/>
    <property type="chains" value="a=1-838"/>
</dbReference>
<dbReference type="PDB" id="7UZH">
    <property type="method" value="EM"/>
    <property type="resolution" value="3.80 A"/>
    <property type="chains" value="a=1-838"/>
</dbReference>
<dbReference type="PDB" id="7UZI">
    <property type="method" value="EM"/>
    <property type="resolution" value="3.90 A"/>
    <property type="chains" value="a=1-838"/>
</dbReference>
<dbReference type="PDB" id="9B8O">
    <property type="method" value="EM"/>
    <property type="resolution" value="3.20 A"/>
    <property type="chains" value="a=1-826"/>
</dbReference>
<dbReference type="PDB" id="9B8Q">
    <property type="method" value="EM"/>
    <property type="resolution" value="3.80 A"/>
    <property type="chains" value="a=1-838"/>
</dbReference>
<dbReference type="PDB" id="9BRB">
    <property type="method" value="EM"/>
    <property type="resolution" value="3.60 A"/>
    <property type="chains" value="a=1-838"/>
</dbReference>
<dbReference type="PDB" id="9BRC">
    <property type="method" value="EM"/>
    <property type="resolution" value="3.90 A"/>
    <property type="chains" value="a=1-838"/>
</dbReference>
<dbReference type="PDB" id="9BRD">
    <property type="method" value="EM"/>
    <property type="resolution" value="3.50 A"/>
    <property type="chains" value="a=1-832"/>
</dbReference>
<dbReference type="PDBsum" id="6VQ6"/>
<dbReference type="PDBsum" id="6VQ7"/>
<dbReference type="PDBsum" id="6VQ8"/>
<dbReference type="PDBsum" id="6VQC"/>
<dbReference type="PDBsum" id="6VQG"/>
<dbReference type="PDBsum" id="6VQH"/>
<dbReference type="PDBsum" id="6VQI"/>
<dbReference type="PDBsum" id="6VQJ"/>
<dbReference type="PDBsum" id="6VQK"/>
<dbReference type="PDBsum" id="7UZF"/>
<dbReference type="PDBsum" id="7UZG"/>
<dbReference type="PDBsum" id="7UZH"/>
<dbReference type="PDBsum" id="7UZI"/>
<dbReference type="PDBsum" id="9B8O"/>
<dbReference type="PDBsum" id="9B8Q"/>
<dbReference type="PDBsum" id="9BRB"/>
<dbReference type="PDBsum" id="9BRC"/>
<dbReference type="PDBsum" id="9BRD"/>
<dbReference type="EMDB" id="EMD-21348"/>
<dbReference type="EMDB" id="EMD-21349"/>
<dbReference type="EMDB" id="EMD-21350"/>
<dbReference type="EMDB" id="EMD-21351"/>
<dbReference type="EMDB" id="EMD-21352"/>
<dbReference type="EMDB" id="EMD-21353"/>
<dbReference type="EMDB" id="EMD-26909"/>
<dbReference type="EMDB" id="EMD-26910"/>
<dbReference type="EMDB" id="EMD-26911"/>
<dbReference type="EMDB" id="EMD-26912"/>
<dbReference type="EMDB" id="EMD-44350"/>
<dbReference type="EMDB" id="EMD-44352"/>
<dbReference type="SMR" id="P25286"/>
<dbReference type="BioGRID" id="248368">
    <property type="interactions" value="5"/>
</dbReference>
<dbReference type="CORUM" id="P25286"/>
<dbReference type="FunCoup" id="P25286">
    <property type="interactions" value="3188"/>
</dbReference>
<dbReference type="IntAct" id="P25286">
    <property type="interactions" value="6"/>
</dbReference>
<dbReference type="MINT" id="P25286"/>
<dbReference type="STRING" id="10116.ENSRNOP00000071954"/>
<dbReference type="GlyGen" id="P25286">
    <property type="glycosylation" value="2 sites, 1 O-linked glycan (1 site)"/>
</dbReference>
<dbReference type="iPTMnet" id="P25286"/>
<dbReference type="PhosphoSitePlus" id="P25286"/>
<dbReference type="jPOST" id="P25286"/>
<dbReference type="PaxDb" id="10116-ENSRNOP00000052113"/>
<dbReference type="GeneID" id="29757"/>
<dbReference type="KEGG" id="rno:29757"/>
<dbReference type="UCSC" id="RGD:68405">
    <molecule id="P25286-1"/>
    <property type="organism name" value="rat"/>
</dbReference>
<dbReference type="AGR" id="RGD:68405"/>
<dbReference type="CTD" id="535"/>
<dbReference type="RGD" id="68405">
    <property type="gene designation" value="Atp6v0a1"/>
</dbReference>
<dbReference type="eggNOG" id="KOG2189">
    <property type="taxonomic scope" value="Eukaryota"/>
</dbReference>
<dbReference type="InParanoid" id="P25286"/>
<dbReference type="OrthoDB" id="10264220at2759"/>
<dbReference type="PhylomeDB" id="P25286"/>
<dbReference type="Reactome" id="R-RNO-1222556">
    <property type="pathway name" value="ROS and RNS production in phagocytes"/>
</dbReference>
<dbReference type="Reactome" id="R-RNO-6798695">
    <property type="pathway name" value="Neutrophil degranulation"/>
</dbReference>
<dbReference type="Reactome" id="R-RNO-77387">
    <property type="pathway name" value="Insulin receptor recycling"/>
</dbReference>
<dbReference type="Reactome" id="R-RNO-917977">
    <property type="pathway name" value="Transferrin endocytosis and recycling"/>
</dbReference>
<dbReference type="Reactome" id="R-RNO-983712">
    <property type="pathway name" value="Ion channel transport"/>
</dbReference>
<dbReference type="PRO" id="PR:P25286"/>
<dbReference type="Proteomes" id="UP000002494">
    <property type="component" value="Unplaced"/>
</dbReference>
<dbReference type="GO" id="GO:0030665">
    <property type="term" value="C:clathrin-coated vesicle membrane"/>
    <property type="evidence" value="ECO:0007669"/>
    <property type="project" value="UniProtKB-SubCell"/>
</dbReference>
<dbReference type="GO" id="GO:0005737">
    <property type="term" value="C:cytoplasm"/>
    <property type="evidence" value="ECO:0000266"/>
    <property type="project" value="RGD"/>
</dbReference>
<dbReference type="GO" id="GO:0042470">
    <property type="term" value="C:melanosome"/>
    <property type="evidence" value="ECO:0007669"/>
    <property type="project" value="UniProtKB-SubCell"/>
</dbReference>
<dbReference type="GO" id="GO:0016020">
    <property type="term" value="C:membrane"/>
    <property type="evidence" value="ECO:0000266"/>
    <property type="project" value="RGD"/>
</dbReference>
<dbReference type="GO" id="GO:0048471">
    <property type="term" value="C:perinuclear region of cytoplasm"/>
    <property type="evidence" value="ECO:0000266"/>
    <property type="project" value="RGD"/>
</dbReference>
<dbReference type="GO" id="GO:0005886">
    <property type="term" value="C:plasma membrane"/>
    <property type="evidence" value="ECO:0000266"/>
    <property type="project" value="RGD"/>
</dbReference>
<dbReference type="GO" id="GO:0030672">
    <property type="term" value="C:synaptic vesicle membrane"/>
    <property type="evidence" value="ECO:0000314"/>
    <property type="project" value="SynGO"/>
</dbReference>
<dbReference type="GO" id="GO:0043195">
    <property type="term" value="C:terminal bouton"/>
    <property type="evidence" value="ECO:0007005"/>
    <property type="project" value="ParkinsonsUK-UCL"/>
</dbReference>
<dbReference type="GO" id="GO:0016471">
    <property type="term" value="C:vacuolar proton-transporting V-type ATPase complex"/>
    <property type="evidence" value="ECO:0000318"/>
    <property type="project" value="GO_Central"/>
</dbReference>
<dbReference type="GO" id="GO:0000220">
    <property type="term" value="C:vacuolar proton-transporting V-type ATPase, V0 domain"/>
    <property type="evidence" value="ECO:0000250"/>
    <property type="project" value="UniProtKB"/>
</dbReference>
<dbReference type="GO" id="GO:0051117">
    <property type="term" value="F:ATPase binding"/>
    <property type="evidence" value="ECO:0000266"/>
    <property type="project" value="RGD"/>
</dbReference>
<dbReference type="GO" id="GO:0046961">
    <property type="term" value="F:proton-transporting ATPase activity, rotational mechanism"/>
    <property type="evidence" value="ECO:0007669"/>
    <property type="project" value="InterPro"/>
</dbReference>
<dbReference type="GO" id="GO:0016241">
    <property type="term" value="P:regulation of macroautophagy"/>
    <property type="evidence" value="ECO:0000266"/>
    <property type="project" value="RGD"/>
</dbReference>
<dbReference type="GO" id="GO:0097401">
    <property type="term" value="P:synaptic vesicle lumen acidification"/>
    <property type="evidence" value="ECO:0000266"/>
    <property type="project" value="RGD"/>
</dbReference>
<dbReference type="GO" id="GO:0007035">
    <property type="term" value="P:vacuolar acidification"/>
    <property type="evidence" value="ECO:0000318"/>
    <property type="project" value="GO_Central"/>
</dbReference>
<dbReference type="InterPro" id="IPR002490">
    <property type="entry name" value="V-ATPase_116kDa_su"/>
</dbReference>
<dbReference type="InterPro" id="IPR026028">
    <property type="entry name" value="V-type_ATPase_116kDa_su_euka"/>
</dbReference>
<dbReference type="PANTHER" id="PTHR11629:SF68">
    <property type="entry name" value="V-TYPE PROTON ATPASE 116 KDA SUBUNIT A 1"/>
    <property type="match status" value="1"/>
</dbReference>
<dbReference type="PANTHER" id="PTHR11629">
    <property type="entry name" value="VACUOLAR PROTON ATPASES"/>
    <property type="match status" value="1"/>
</dbReference>
<dbReference type="Pfam" id="PF01496">
    <property type="entry name" value="V_ATPase_I"/>
    <property type="match status" value="1"/>
</dbReference>
<dbReference type="PIRSF" id="PIRSF001293">
    <property type="entry name" value="ATP6V0A1"/>
    <property type="match status" value="1"/>
</dbReference>
<protein>
    <recommendedName>
        <fullName>V-type proton ATPase 116 kDa subunit a 1</fullName>
        <shortName>V-ATPase 116 kDa subunit a 1</shortName>
    </recommendedName>
    <alternativeName>
        <fullName>Clathrin-coated vesicle/synaptic vesicle proton pump 116 kDa subunit</fullName>
    </alternativeName>
    <alternativeName>
        <fullName>Vacuolar adenosine triphosphatase subunit Ac116</fullName>
    </alternativeName>
    <alternativeName>
        <fullName>Vacuolar proton pump subunit 1</fullName>
    </alternativeName>
    <alternativeName>
        <fullName>Vacuolar proton translocating ATPase 116 kDa subunit a isoform 1</fullName>
    </alternativeName>
</protein>
<gene>
    <name type="primary">Atp6v0a1</name>
    <name type="synonym">Atp6n1</name>
    <name type="synonym">Vpp1</name>
</gene>
<name>VPP1_RAT</name>
<sequence length="838" mass="96328">MGELFRSEEMTLAQLFLQSEAAYCCVSELEELGKVQFRDLNPDVNVFQRKFVNEVRRCEEMDRKLRFVEKEIRKANIPIMDTGENPEVPFPRDMIDLEANFEKIENELKEINTNQEALKRNFLELTELKFILRKTQQFFDEMADPDLLEESSSLLEPNEMGRGAPLRLGFVAGVINRERIPTFERMLWRVCRGNVFLRQAEIENPLEDPVTGDYVHKSVFIIFFQGDQLKNRVKKICEGFRASLYPCPETPQERKEMASGVNTRIDDLQMVLNQTEDHRQRVLQAAAKNIRVWFIKVRKMKAIYHTLNLCNIDVTQKCLIAEVWCPVTDLDSIQFALRRGTEHSGSTVPSILNRMQTNQTPPTYNKTNKFTHGFQNIVDAYGIGTYREINPAPYTVITFPFLFAVMFGDFGHGILMTLFAVWMVLRESRILSQKNENEMFSMVFSGRYIILLMGLFSIYTGLIYNDCFSKSLNIFGSSWSVRPMFTIGNWTEETLLGSSVLQLNPAIPGVFGGPYPFGIDPIWNIATNKLTFLNSFKMKMSVILGIIHMLFGVSLSLFNHIYFKKPLNIYFGFIPEIIFMSSLFGYLVILIFYKWTAYDAHSSRNAPSLLIHFINMFLFSYPESGNAMLYSGQKGIQCFLIVVAMLCVPWMLLFKPLILRHQYLRKKHLGTLNFGGIRVGNGPTEEDAEIIQHDQLSTHSEDAEEPTEDEVFDFGDTMVHQAIHTIEYCLGCISNTASYLRLWALSLAHAQLSEVLWTMVIHIGLHVRSLAGGLGLFFIFAAFATLTVAILLIMEGLSAFLHALRLHWVEFQNKFYTGTGFKFLPFSFEHIREGKFDE</sequence>
<accession>P25286</accession>
<keyword id="KW-0002">3D-structure</keyword>
<keyword id="KW-0025">Alternative splicing</keyword>
<keyword id="KW-0968">Cytoplasmic vesicle</keyword>
<keyword id="KW-0375">Hydrogen ion transport</keyword>
<keyword id="KW-0406">Ion transport</keyword>
<keyword id="KW-0472">Membrane</keyword>
<keyword id="KW-0597">Phosphoprotein</keyword>
<keyword id="KW-1185">Reference proteome</keyword>
<keyword id="KW-0770">Synapse</keyword>
<keyword id="KW-0812">Transmembrane</keyword>
<keyword id="KW-1133">Transmembrane helix</keyword>
<keyword id="KW-0813">Transport</keyword>
<comment type="function">
    <text evidence="1 3 6">Subunit of the V0 complex of vacuolar(H+)-ATPase (V-ATPase), a multisubunit enzyme composed of a peripheral complex (V1) that hydrolyzes ATP and a membrane integral complex (V0) that translocates protons (PubMed:32165585). V-ATPase is responsible for the acidification of various organelles, such as lysosomes, endosomes, the trans-Golgi network, and secretory granules, including synaptic vesicles (PubMed:32165585). In certain cell types, can be exported to the plasma membrane, where it is involved in the acidification of the extracellular environment (PubMed:32165585). Required for assembly and activity of the vacuolar ATPase (By similarity). Through its action on compartment acidification, plays an essential role in neuronal development in terms of integrity and connectivity of neurons (By similarity).</text>
</comment>
<comment type="subunit">
    <text evidence="2 6">V-ATPase is a heteromultimeric enzyme made up of two complexes: the ATP-hydrolytic V1 complex and the proton translocation V0 complex (PubMed:32165585). The V1 complex consists of three catalytic AB heterodimers that form a heterohexamer, three peripheral stalks each consisting of EG heterodimers, one central rotor including subunits D and F, and the regulatory subunits C and H (PubMed:32165585). The proton translocation complex V0 consists of the proton transport subunit a, a ring of proteolipid subunits c9c'', rotary subunit d, subunits e and f, and the accessory subunits ATP6AP1/Ac45 and ATP6AP2/PRR (PubMed:32165585). Interacts with SPAAR (By similarity).</text>
</comment>
<comment type="subcellular location">
    <subcellularLocation>
        <location evidence="6">Cytoplasmic vesicle</location>
        <location evidence="6">Clathrin-coated vesicle membrane</location>
        <topology evidence="4">Multi-pass membrane protein</topology>
    </subcellularLocation>
    <subcellularLocation>
        <location evidence="6">Cytoplasmic vesicle</location>
        <location evidence="6">Secretory vesicle</location>
        <location evidence="6">Synaptic vesicle membrane</location>
        <topology evidence="4">Multi-pass membrane protein</topology>
    </subcellularLocation>
    <subcellularLocation>
        <location evidence="2">Melanosome</location>
    </subcellularLocation>
</comment>
<comment type="alternative products">
    <event type="alternative splicing"/>
    <isoform>
        <id>P25286-1</id>
        <name>I</name>
        <sequence type="displayed"/>
    </isoform>
    <isoform>
        <id>P25286-2</id>
        <name>II</name>
        <sequence type="described" ref="VSP_000344"/>
    </isoform>
</comment>
<comment type="tissue specificity">
    <molecule>Isoform I</molecule>
    <text evidence="5 6">Expressed in brain (at protein level).</text>
</comment>
<comment type="tissue specificity">
    <molecule>Isoform II</molecule>
    <text evidence="5">Expressed in heart, kidney, liver, spleen, and to a lesser extent in brain.</text>
</comment>
<comment type="similarity">
    <text evidence="8">Belongs to the V-ATPase 116 kDa subunit family.</text>
</comment>
<reference key="1">
    <citation type="journal article" date="1991" name="J. Biol. Chem.">
        <title>Structure of the 116-kDa polypeptide of the clathrin-coated vesicle/synaptic vesicle proton pump.</title>
        <authorList>
            <person name="Perin M.S."/>
            <person name="Fried V.A."/>
            <person name="Stone D.K."/>
            <person name="Xie X.-S."/>
            <person name="Suedhof T.C."/>
        </authorList>
    </citation>
    <scope>NUCLEOTIDE SEQUENCE [MRNA] (ISOFORMS I AND II)</scope>
    <scope>TISSUE SPECIFICITY</scope>
    <source>
        <tissue>Brain</tissue>
    </source>
</reference>
<reference evidence="9 10 11 12 13 14 15 16 17" key="2">
    <citation type="journal article" date="2020" name="Science">
        <title>Structure of V-ATPase from the mammalian brain.</title>
        <authorList>
            <person name="Abbas Y.M."/>
            <person name="Wu D."/>
            <person name="Bueler S.A."/>
            <person name="Robinson C.V."/>
            <person name="Rubinstein J.L."/>
        </authorList>
    </citation>
    <scope>STRUCTURE BY ELECTRON MICROSCOPY (3.80 ANGSTROMS)</scope>
    <scope>FUNCTION</scope>
    <scope>IDENTIFICATION IN THE V-ATPASE COMPLEX</scope>
    <scope>SUBCELLULAR LOCATION</scope>
    <scope>IDENTIFICATION BY MASS SPECTROMETRY</scope>
    <scope>TISSUE SPECIFICITY</scope>
</reference>
<organism>
    <name type="scientific">Rattus norvegicus</name>
    <name type="common">Rat</name>
    <dbReference type="NCBI Taxonomy" id="10116"/>
    <lineage>
        <taxon>Eukaryota</taxon>
        <taxon>Metazoa</taxon>
        <taxon>Chordata</taxon>
        <taxon>Craniata</taxon>
        <taxon>Vertebrata</taxon>
        <taxon>Euteleostomi</taxon>
        <taxon>Mammalia</taxon>
        <taxon>Eutheria</taxon>
        <taxon>Euarchontoglires</taxon>
        <taxon>Glires</taxon>
        <taxon>Rodentia</taxon>
        <taxon>Myomorpha</taxon>
        <taxon>Muroidea</taxon>
        <taxon>Muridae</taxon>
        <taxon>Murinae</taxon>
        <taxon>Rattus</taxon>
    </lineage>
</organism>
<evidence type="ECO:0000250" key="1">
    <source>
        <dbReference type="UniProtKB" id="P32563"/>
    </source>
</evidence>
<evidence type="ECO:0000250" key="2">
    <source>
        <dbReference type="UniProtKB" id="Q93050"/>
    </source>
</evidence>
<evidence type="ECO:0000250" key="3">
    <source>
        <dbReference type="UniProtKB" id="Q9Z1G4"/>
    </source>
</evidence>
<evidence type="ECO:0000255" key="4"/>
<evidence type="ECO:0000269" key="5">
    <source>
    </source>
</evidence>
<evidence type="ECO:0000269" key="6">
    <source>
    </source>
</evidence>
<evidence type="ECO:0000303" key="7">
    <source>
    </source>
</evidence>
<evidence type="ECO:0000305" key="8"/>
<evidence type="ECO:0007744" key="9">
    <source>
        <dbReference type="PDB" id="6VQ6"/>
    </source>
</evidence>
<evidence type="ECO:0007744" key="10">
    <source>
        <dbReference type="PDB" id="6VQ7"/>
    </source>
</evidence>
<evidence type="ECO:0007744" key="11">
    <source>
        <dbReference type="PDB" id="6VQ8"/>
    </source>
</evidence>
<evidence type="ECO:0007744" key="12">
    <source>
        <dbReference type="PDB" id="6VQC"/>
    </source>
</evidence>
<evidence type="ECO:0007744" key="13">
    <source>
        <dbReference type="PDB" id="6VQG"/>
    </source>
</evidence>
<evidence type="ECO:0007744" key="14">
    <source>
        <dbReference type="PDB" id="6VQH"/>
    </source>
</evidence>
<evidence type="ECO:0007744" key="15">
    <source>
        <dbReference type="PDB" id="6VQI"/>
    </source>
</evidence>
<evidence type="ECO:0007744" key="16">
    <source>
        <dbReference type="PDB" id="6VQJ"/>
    </source>
</evidence>
<evidence type="ECO:0007744" key="17">
    <source>
        <dbReference type="PDB" id="6VQK"/>
    </source>
</evidence>
<evidence type="ECO:0007829" key="18">
    <source>
        <dbReference type="PDB" id="9B8O"/>
    </source>
</evidence>